<feature type="chain" id="PRO_0000208204" description="Acyl-CoA:lysophosphatidylglycerol acyltransferase 1">
    <location>
        <begin position="1"/>
        <end position="370"/>
    </location>
</feature>
<feature type="transmembrane region" description="Helical" evidence="3">
    <location>
        <begin position="22"/>
        <end position="42"/>
    </location>
</feature>
<feature type="transmembrane region" description="Helical" evidence="3">
    <location>
        <begin position="342"/>
        <end position="362"/>
    </location>
</feature>
<feature type="short sequence motif" description="HXXXXD motif">
    <location>
        <begin position="101"/>
        <end position="106"/>
    </location>
</feature>
<keyword id="KW-0012">Acyltransferase</keyword>
<keyword id="KW-0256">Endoplasmic reticulum</keyword>
<keyword id="KW-0444">Lipid biosynthesis</keyword>
<keyword id="KW-0443">Lipid metabolism</keyword>
<keyword id="KW-0472">Membrane</keyword>
<keyword id="KW-0594">Phospholipid biosynthesis</keyword>
<keyword id="KW-1208">Phospholipid metabolism</keyword>
<keyword id="KW-1267">Proteomics identification</keyword>
<keyword id="KW-1185">Reference proteome</keyword>
<keyword id="KW-0808">Transferase</keyword>
<keyword id="KW-0812">Transmembrane</keyword>
<keyword id="KW-1133">Transmembrane helix</keyword>
<gene>
    <name evidence="10" type="primary">LPGAT1</name>
    <name type="synonym">FAM34A</name>
    <name evidence="7" type="synonym">KIAA0205</name>
</gene>
<name>LGAT1_HUMAN</name>
<reference key="1">
    <citation type="journal article" date="2004" name="J. Biol. Chem.">
        <title>Identification and characterization of a gene encoding human LPGAT1, an endoplasmic reticulum-associated lysophosphatidylglycerol acyltransferase.</title>
        <authorList>
            <person name="Yang Y."/>
            <person name="Cao J."/>
            <person name="Shi Y."/>
        </authorList>
    </citation>
    <scope>NUCLEOTIDE SEQUENCE [MRNA]</scope>
    <scope>FUNCTION</scope>
    <scope>SUBCELLULAR LOCATION</scope>
    <scope>TISSUE SPECIFICITY</scope>
    <scope>CATALYTIC ACTIVITY</scope>
    <source>
        <tissue>Liver</tissue>
    </source>
</reference>
<reference key="2">
    <citation type="submission" date="2004-02" db="EMBL/GenBank/DDBJ databases">
        <title>Screening and identification of genes trans-regulated by hepatitis B virus pre-S2 protein by microarray assay.</title>
        <authorList>
            <person name="Ji D."/>
            <person name="Cheng J."/>
            <person name="Dong J."/>
            <person name="Liu Y."/>
            <person name="Wang J.-J."/>
            <person name="Guo J."/>
        </authorList>
    </citation>
    <scope>NUCLEOTIDE SEQUENCE [MRNA]</scope>
</reference>
<reference key="3">
    <citation type="journal article" date="1996" name="DNA Res.">
        <title>Prediction of the coding sequences of unidentified human genes. VI. The coding sequences of 80 new genes (KIAA0201-KIAA0280) deduced by analysis of cDNA clones from cell line KG-1 and brain.</title>
        <authorList>
            <person name="Nagase T."/>
            <person name="Seki N."/>
            <person name="Ishikawa K."/>
            <person name="Ohira M."/>
            <person name="Kawarabayasi Y."/>
            <person name="Ohara O."/>
            <person name="Tanaka A."/>
            <person name="Kotani H."/>
            <person name="Miyajima N."/>
            <person name="Nomura N."/>
        </authorList>
    </citation>
    <scope>NUCLEOTIDE SEQUENCE [LARGE SCALE MRNA]</scope>
    <source>
        <tissue>Bone marrow</tissue>
    </source>
</reference>
<reference key="4">
    <citation type="journal article" date="2006" name="Nature">
        <title>The DNA sequence and biological annotation of human chromosome 1.</title>
        <authorList>
            <person name="Gregory S.G."/>
            <person name="Barlow K.F."/>
            <person name="McLay K.E."/>
            <person name="Kaul R."/>
            <person name="Swarbreck D."/>
            <person name="Dunham A."/>
            <person name="Scott C.E."/>
            <person name="Howe K.L."/>
            <person name="Woodfine K."/>
            <person name="Spencer C.C.A."/>
            <person name="Jones M.C."/>
            <person name="Gillson C."/>
            <person name="Searle S."/>
            <person name="Zhou Y."/>
            <person name="Kokocinski F."/>
            <person name="McDonald L."/>
            <person name="Evans R."/>
            <person name="Phillips K."/>
            <person name="Atkinson A."/>
            <person name="Cooper R."/>
            <person name="Jones C."/>
            <person name="Hall R.E."/>
            <person name="Andrews T.D."/>
            <person name="Lloyd C."/>
            <person name="Ainscough R."/>
            <person name="Almeida J.P."/>
            <person name="Ambrose K.D."/>
            <person name="Anderson F."/>
            <person name="Andrew R.W."/>
            <person name="Ashwell R.I.S."/>
            <person name="Aubin K."/>
            <person name="Babbage A.K."/>
            <person name="Bagguley C.L."/>
            <person name="Bailey J."/>
            <person name="Beasley H."/>
            <person name="Bethel G."/>
            <person name="Bird C.P."/>
            <person name="Bray-Allen S."/>
            <person name="Brown J.Y."/>
            <person name="Brown A.J."/>
            <person name="Buckley D."/>
            <person name="Burton J."/>
            <person name="Bye J."/>
            <person name="Carder C."/>
            <person name="Chapman J.C."/>
            <person name="Clark S.Y."/>
            <person name="Clarke G."/>
            <person name="Clee C."/>
            <person name="Cobley V."/>
            <person name="Collier R.E."/>
            <person name="Corby N."/>
            <person name="Coville G.J."/>
            <person name="Davies J."/>
            <person name="Deadman R."/>
            <person name="Dunn M."/>
            <person name="Earthrowl M."/>
            <person name="Ellington A.G."/>
            <person name="Errington H."/>
            <person name="Frankish A."/>
            <person name="Frankland J."/>
            <person name="French L."/>
            <person name="Garner P."/>
            <person name="Garnett J."/>
            <person name="Gay L."/>
            <person name="Ghori M.R.J."/>
            <person name="Gibson R."/>
            <person name="Gilby L.M."/>
            <person name="Gillett W."/>
            <person name="Glithero R.J."/>
            <person name="Grafham D.V."/>
            <person name="Griffiths C."/>
            <person name="Griffiths-Jones S."/>
            <person name="Grocock R."/>
            <person name="Hammond S."/>
            <person name="Harrison E.S.I."/>
            <person name="Hart E."/>
            <person name="Haugen E."/>
            <person name="Heath P.D."/>
            <person name="Holmes S."/>
            <person name="Holt K."/>
            <person name="Howden P.J."/>
            <person name="Hunt A.R."/>
            <person name="Hunt S.E."/>
            <person name="Hunter G."/>
            <person name="Isherwood J."/>
            <person name="James R."/>
            <person name="Johnson C."/>
            <person name="Johnson D."/>
            <person name="Joy A."/>
            <person name="Kay M."/>
            <person name="Kershaw J.K."/>
            <person name="Kibukawa M."/>
            <person name="Kimberley A.M."/>
            <person name="King A."/>
            <person name="Knights A.J."/>
            <person name="Lad H."/>
            <person name="Laird G."/>
            <person name="Lawlor S."/>
            <person name="Leongamornlert D.A."/>
            <person name="Lloyd D.M."/>
            <person name="Loveland J."/>
            <person name="Lovell J."/>
            <person name="Lush M.J."/>
            <person name="Lyne R."/>
            <person name="Martin S."/>
            <person name="Mashreghi-Mohammadi M."/>
            <person name="Matthews L."/>
            <person name="Matthews N.S.W."/>
            <person name="McLaren S."/>
            <person name="Milne S."/>
            <person name="Mistry S."/>
            <person name="Moore M.J.F."/>
            <person name="Nickerson T."/>
            <person name="O'Dell C.N."/>
            <person name="Oliver K."/>
            <person name="Palmeiri A."/>
            <person name="Palmer S.A."/>
            <person name="Parker A."/>
            <person name="Patel D."/>
            <person name="Pearce A.V."/>
            <person name="Peck A.I."/>
            <person name="Pelan S."/>
            <person name="Phelps K."/>
            <person name="Phillimore B.J."/>
            <person name="Plumb R."/>
            <person name="Rajan J."/>
            <person name="Raymond C."/>
            <person name="Rouse G."/>
            <person name="Saenphimmachak C."/>
            <person name="Sehra H.K."/>
            <person name="Sheridan E."/>
            <person name="Shownkeen R."/>
            <person name="Sims S."/>
            <person name="Skuce C.D."/>
            <person name="Smith M."/>
            <person name="Steward C."/>
            <person name="Subramanian S."/>
            <person name="Sycamore N."/>
            <person name="Tracey A."/>
            <person name="Tromans A."/>
            <person name="Van Helmond Z."/>
            <person name="Wall M."/>
            <person name="Wallis J.M."/>
            <person name="White S."/>
            <person name="Whitehead S.L."/>
            <person name="Wilkinson J.E."/>
            <person name="Willey D.L."/>
            <person name="Williams H."/>
            <person name="Wilming L."/>
            <person name="Wray P.W."/>
            <person name="Wu Z."/>
            <person name="Coulson A."/>
            <person name="Vaudin M."/>
            <person name="Sulston J.E."/>
            <person name="Durbin R.M."/>
            <person name="Hubbard T."/>
            <person name="Wooster R."/>
            <person name="Dunham I."/>
            <person name="Carter N.P."/>
            <person name="McVean G."/>
            <person name="Ross M.T."/>
            <person name="Harrow J."/>
            <person name="Olson M.V."/>
            <person name="Beck S."/>
            <person name="Rogers J."/>
            <person name="Bentley D.R."/>
        </authorList>
    </citation>
    <scope>NUCLEOTIDE SEQUENCE [LARGE SCALE GENOMIC DNA]</scope>
</reference>
<reference key="5">
    <citation type="submission" date="2005-09" db="EMBL/GenBank/DDBJ databases">
        <authorList>
            <person name="Mural R.J."/>
            <person name="Istrail S."/>
            <person name="Sutton G."/>
            <person name="Florea L."/>
            <person name="Halpern A.L."/>
            <person name="Mobarry C.M."/>
            <person name="Lippert R."/>
            <person name="Walenz B."/>
            <person name="Shatkay H."/>
            <person name="Dew I."/>
            <person name="Miller J.R."/>
            <person name="Flanigan M.J."/>
            <person name="Edwards N.J."/>
            <person name="Bolanos R."/>
            <person name="Fasulo D."/>
            <person name="Halldorsson B.V."/>
            <person name="Hannenhalli S."/>
            <person name="Turner R."/>
            <person name="Yooseph S."/>
            <person name="Lu F."/>
            <person name="Nusskern D.R."/>
            <person name="Shue B.C."/>
            <person name="Zheng X.H."/>
            <person name="Zhong F."/>
            <person name="Delcher A.L."/>
            <person name="Huson D.H."/>
            <person name="Kravitz S.A."/>
            <person name="Mouchard L."/>
            <person name="Reinert K."/>
            <person name="Remington K.A."/>
            <person name="Clark A.G."/>
            <person name="Waterman M.S."/>
            <person name="Eichler E.E."/>
            <person name="Adams M.D."/>
            <person name="Hunkapiller M.W."/>
            <person name="Myers E.W."/>
            <person name="Venter J.C."/>
        </authorList>
    </citation>
    <scope>NUCLEOTIDE SEQUENCE [LARGE SCALE GENOMIC DNA]</scope>
</reference>
<reference key="6">
    <citation type="journal article" date="2004" name="Genome Res.">
        <title>The status, quality, and expansion of the NIH full-length cDNA project: the Mammalian Gene Collection (MGC).</title>
        <authorList>
            <consortium name="The MGC Project Team"/>
        </authorList>
    </citation>
    <scope>NUCLEOTIDE SEQUENCE [LARGE SCALE MRNA]</scope>
    <source>
        <tissue>Testis</tissue>
    </source>
</reference>
<reference key="7">
    <citation type="journal article" date="2014" name="J. Proteomics">
        <title>An enzyme assisted RP-RPLC approach for in-depth analysis of human liver phosphoproteome.</title>
        <authorList>
            <person name="Bian Y."/>
            <person name="Song C."/>
            <person name="Cheng K."/>
            <person name="Dong M."/>
            <person name="Wang F."/>
            <person name="Huang J."/>
            <person name="Sun D."/>
            <person name="Wang L."/>
            <person name="Ye M."/>
            <person name="Zou H."/>
        </authorList>
    </citation>
    <scope>IDENTIFICATION BY MASS SPECTROMETRY [LARGE SCALE ANALYSIS]</scope>
    <source>
        <tissue>Liver</tissue>
    </source>
</reference>
<reference key="8">
    <citation type="journal article" date="2022" name="J. Biol. Chem.">
        <title>Update and nomenclature proposal for mammalian lysophospholipid acyltransferases, which create membrane phospholipid diversity.</title>
        <authorList>
            <person name="Valentine W.J."/>
            <person name="Yanagida K."/>
            <person name="Kawana H."/>
            <person name="Kono N."/>
            <person name="Noda N.N."/>
            <person name="Aoki J."/>
            <person name="Shindou H."/>
        </authorList>
    </citation>
    <scope>NOMENCLATURE</scope>
</reference>
<reference key="9">
    <citation type="journal article" date="2022" name="J. Lipid Res.">
        <title>Identification and characterization of LPLAT7 as an sn-1-specific lysophospholipid acyltransferase.</title>
        <authorList>
            <person name="Kawana H."/>
            <person name="Ozawa M."/>
            <person name="Shibata T."/>
            <person name="Onishi H."/>
            <person name="Sato Y."/>
            <person name="Kano K."/>
            <person name="Shindou H."/>
            <person name="Shimizu T."/>
            <person name="Kono N."/>
            <person name="Aoki J."/>
        </authorList>
    </citation>
    <scope>FUNCTION</scope>
    <scope>CATALYTIC ACTIVITY</scope>
</reference>
<comment type="function">
    <text evidence="2 4 5">Lysophospholipid acyltransferase involved in fatty acyl chain remodeling of glycerophospholipids in the endoplasmic reticulum membrane (By similarity). Selectively catalyzes the transfer and esterification of saturated long-chain fatty acids from acyl-CoA to the sn-1 position of 1-lyso-2-acyl phosphatidylethanolamines (1-lyso-PE, LPE), with a preference for stearoyl CoA over palmitoyl CoA as acyl donor (PubMed:36049524). Acts in concert with an unknown phospholipase A1 to convert palmitate phosphatidylethanolamine (PE) species into stearate ones. Provides substrates to the PE methylation pathway, controlling stearate/palmitate composition of PE and phosphatidylcholine (PC) species with an overall impact on de novo hepatic lipid synthesis, body fat content and life span (By similarity). Can acylate lysophosphatidylglycerols (LPG) using various saturated fatty acyl-CoAs as acyl donors (PubMed:15485873). Can also acylate monoacylglycerols with a preference for 2-monoacylglycerols over 1-monoacylglycerols (By similarity). Has no activity toward lysophosphatidic acids (LPA) (By similarity).</text>
</comment>
<comment type="catalytic activity">
    <reaction evidence="2">
        <text>a 2-acyl-sn-glycero-3-phosphoethanolamine + octadecanoyl-CoA = 1-octadecanoyl-2-acyl-sn-glycero-3-phosphoethanolamine + CoA</text>
        <dbReference type="Rhea" id="RHEA:70583"/>
        <dbReference type="ChEBI" id="CHEBI:57287"/>
        <dbReference type="ChEBI" id="CHEBI:57394"/>
        <dbReference type="ChEBI" id="CHEBI:65213"/>
        <dbReference type="ChEBI" id="CHEBI:189703"/>
    </reaction>
    <physiologicalReaction direction="left-to-right" evidence="2">
        <dbReference type="Rhea" id="RHEA:70584"/>
    </physiologicalReaction>
</comment>
<comment type="catalytic activity">
    <reaction evidence="5">
        <text>2-(9Z-octadecenoyl)-sn-glycero-3-phosphoethanolamine + octadecanoyl-CoA = 1-octadecanoyl-2-(9Z-octadecenoyl)-sn-glycero-3-phosphoethanolamine + CoA</text>
        <dbReference type="Rhea" id="RHEA:70579"/>
        <dbReference type="ChEBI" id="CHEBI:57287"/>
        <dbReference type="ChEBI" id="CHEBI:57394"/>
        <dbReference type="ChEBI" id="CHEBI:75038"/>
        <dbReference type="ChEBI" id="CHEBI:76088"/>
    </reaction>
    <physiologicalReaction direction="left-to-right" evidence="9">
        <dbReference type="Rhea" id="RHEA:70580"/>
    </physiologicalReaction>
</comment>
<comment type="catalytic activity">
    <reaction evidence="2">
        <text>a 2-acyl-sn-glycero-3-phosphoethanolamine + hexadecanoyl-CoA = 1-hexadecanoyl-2-acyl-sn-glycero-3-phosphoethanolamine + CoA</text>
        <dbReference type="Rhea" id="RHEA:70595"/>
        <dbReference type="ChEBI" id="CHEBI:57287"/>
        <dbReference type="ChEBI" id="CHEBI:57379"/>
        <dbReference type="ChEBI" id="CHEBI:65213"/>
        <dbReference type="ChEBI" id="CHEBI:77370"/>
    </reaction>
    <physiologicalReaction direction="left-to-right" evidence="2">
        <dbReference type="Rhea" id="RHEA:70596"/>
    </physiologicalReaction>
</comment>
<comment type="catalytic activity">
    <reaction evidence="5">
        <text>2-(9Z-octadecenoyl)-sn-glycero-3-phosphoethanolamine + hexadecanoyl-CoA = 1-hexadecanoyl-2-(9Z-octadecenoyl)-sn-glycero-3-phosphoethanolamine + CoA</text>
        <dbReference type="Rhea" id="RHEA:70591"/>
        <dbReference type="ChEBI" id="CHEBI:57287"/>
        <dbReference type="ChEBI" id="CHEBI:57379"/>
        <dbReference type="ChEBI" id="CHEBI:73007"/>
        <dbReference type="ChEBI" id="CHEBI:76088"/>
    </reaction>
    <physiologicalReaction direction="left-to-right" evidence="9">
        <dbReference type="Rhea" id="RHEA:70592"/>
    </physiologicalReaction>
</comment>
<comment type="catalytic activity">
    <reaction evidence="4">
        <text>1-tetradecanoyl-sn-glycero-3-phospho-(1'-sn-glycerol) + hexadecanoyl-CoA = 1-tetradecanoyl-2-hexadecanoyl-sn-glycero-3-phospho-(1'-sn-glycerol) + CoA</text>
        <dbReference type="Rhea" id="RHEA:35855"/>
        <dbReference type="ChEBI" id="CHEBI:57287"/>
        <dbReference type="ChEBI" id="CHEBI:57379"/>
        <dbReference type="ChEBI" id="CHEBI:72826"/>
        <dbReference type="ChEBI" id="CHEBI:72830"/>
    </reaction>
    <physiologicalReaction direction="left-to-right" evidence="4">
        <dbReference type="Rhea" id="RHEA:35856"/>
    </physiologicalReaction>
</comment>
<comment type="catalytic activity">
    <reaction evidence="4">
        <text>1-hexadecanoyl-sn-glycero-3-phospho-(1'-sn-glycerol) + dodecanoyl-CoA = 1-hexadecanoyl-2-dodecanoyl-sn-glycero-3-phospho-(1'-sn-glycerol) + CoA</text>
        <dbReference type="Rhea" id="RHEA:40107"/>
        <dbReference type="ChEBI" id="CHEBI:57287"/>
        <dbReference type="ChEBI" id="CHEBI:57375"/>
        <dbReference type="ChEBI" id="CHEBI:75158"/>
        <dbReference type="ChEBI" id="CHEBI:77001"/>
    </reaction>
    <physiologicalReaction direction="left-to-right" evidence="4">
        <dbReference type="Rhea" id="RHEA:40108"/>
    </physiologicalReaction>
</comment>
<comment type="catalytic activity">
    <reaction evidence="4">
        <text>1-hexadecanoyl-sn-glycero-3-phospho-(1'-sn-glycerol) + hexadecanoyl-CoA = 1,2-dihexadecanoyl-sn-glycero-3-phospho-(1'-sn-glycerol) + CoA</text>
        <dbReference type="Rhea" id="RHEA:35851"/>
        <dbReference type="ChEBI" id="CHEBI:57287"/>
        <dbReference type="ChEBI" id="CHEBI:57379"/>
        <dbReference type="ChEBI" id="CHEBI:72829"/>
        <dbReference type="ChEBI" id="CHEBI:75158"/>
    </reaction>
    <physiologicalReaction direction="left-to-right" evidence="4">
        <dbReference type="Rhea" id="RHEA:35852"/>
    </physiologicalReaction>
</comment>
<comment type="catalytic activity">
    <reaction evidence="4">
        <text>1-hexadecanoyl-sn-glycero-3-phospho-(1'-sn-glycerol) + octadecanoyl-CoA = 1-hexadecanoyl-2-octadecanoyl-sn-glycero-3-phospho-(1'-sn-glycerol) + CoA</text>
        <dbReference type="Rhea" id="RHEA:35887"/>
        <dbReference type="ChEBI" id="CHEBI:57287"/>
        <dbReference type="ChEBI" id="CHEBI:57394"/>
        <dbReference type="ChEBI" id="CHEBI:72839"/>
        <dbReference type="ChEBI" id="CHEBI:75158"/>
    </reaction>
    <physiologicalReaction direction="left-to-right" evidence="4">
        <dbReference type="Rhea" id="RHEA:35888"/>
    </physiologicalReaction>
</comment>
<comment type="catalytic activity">
    <reaction evidence="4">
        <text>1-octadecanoyl-sn-glycero-3-phospho-(1'-sn-glycerol) + hexadecanoyl-CoA = 1-octadecanoyl-2-hexadecanoyl-sn-glycero-3-phospho-(1'-sn-glycerol) + CoA</text>
        <dbReference type="Rhea" id="RHEA:35859"/>
        <dbReference type="ChEBI" id="CHEBI:57287"/>
        <dbReference type="ChEBI" id="CHEBI:57379"/>
        <dbReference type="ChEBI" id="CHEBI:72827"/>
        <dbReference type="ChEBI" id="CHEBI:72831"/>
    </reaction>
    <physiologicalReaction direction="left-to-right" evidence="4">
        <dbReference type="Rhea" id="RHEA:35860"/>
    </physiologicalReaction>
</comment>
<comment type="catalytic activity">
    <reaction evidence="4">
        <text>1-(9Z-octadecenoyl)-sn-glycero-3-phospho-(1'-sn-glycerol) + dodecanoyl-CoA = 1-(9Z-octadecenoyl)-2-dodecanoyl-sn-glycero-3-phospho-(1'-sn-glycerol) + CoA</text>
        <dbReference type="Rhea" id="RHEA:40099"/>
        <dbReference type="ChEBI" id="CHEBI:57287"/>
        <dbReference type="ChEBI" id="CHEBI:57375"/>
        <dbReference type="ChEBI" id="CHEBI:72828"/>
        <dbReference type="ChEBI" id="CHEBI:77000"/>
    </reaction>
    <physiologicalReaction direction="left-to-right" evidence="4">
        <dbReference type="Rhea" id="RHEA:40100"/>
    </physiologicalReaction>
</comment>
<comment type="catalytic activity">
    <reaction evidence="4">
        <text>1-hexadecanoyl-sn-glycero-3-phospho-(1'-sn-glycerol) + (9Z)-octadecenoyl-CoA = 1-hexadecanoyl-2-(9Z-octadecenoyl)-sn-glycero-3-phospho-(1'-sn-glycerol) + CoA</text>
        <dbReference type="Rhea" id="RHEA:35891"/>
        <dbReference type="ChEBI" id="CHEBI:57287"/>
        <dbReference type="ChEBI" id="CHEBI:57387"/>
        <dbReference type="ChEBI" id="CHEBI:72841"/>
        <dbReference type="ChEBI" id="CHEBI:75158"/>
    </reaction>
    <physiologicalReaction direction="left-to-right" evidence="4">
        <dbReference type="Rhea" id="RHEA:35892"/>
    </physiologicalReaction>
</comment>
<comment type="catalytic activity">
    <reaction evidence="4">
        <text>1-(9Z-octadecenoyl)-sn-glycero-3-phospho-(1'-sn-glycerol) + hexadecanoyl-CoA = 1-(9Z-octadecenoyl)-2-hexadecanoyl-sn-glycero-3-phospho-(1'-sn-glycerol) + CoA</text>
        <dbReference type="Rhea" id="RHEA:35863"/>
        <dbReference type="ChEBI" id="CHEBI:57287"/>
        <dbReference type="ChEBI" id="CHEBI:57379"/>
        <dbReference type="ChEBI" id="CHEBI:72828"/>
        <dbReference type="ChEBI" id="CHEBI:72832"/>
    </reaction>
    <physiologicalReaction direction="left-to-right" evidence="4">
        <dbReference type="Rhea" id="RHEA:35864"/>
    </physiologicalReaction>
</comment>
<comment type="catalytic activity">
    <reaction evidence="4">
        <text>1-(9Z-octadecenoyl)-sn-glycero-3-phospho-(1'-sn-glycerol) + (9Z)-octadecenoyl-CoA = 1,2-di-(9Z-octadecenoyl)-sn-glycero-3-phospho-(1'-sn-glycerol) + CoA</text>
        <dbReference type="Rhea" id="RHEA:37651"/>
        <dbReference type="ChEBI" id="CHEBI:57287"/>
        <dbReference type="ChEBI" id="CHEBI:57387"/>
        <dbReference type="ChEBI" id="CHEBI:72828"/>
        <dbReference type="ChEBI" id="CHEBI:75163"/>
    </reaction>
    <physiologicalReaction direction="left-to-right" evidence="4">
        <dbReference type="Rhea" id="RHEA:37652"/>
    </physiologicalReaction>
</comment>
<comment type="catalytic activity">
    <reaction evidence="2">
        <text>a 2-acylglycerol + an acyl-CoA = a 1,2-diacylglycerol + CoA</text>
        <dbReference type="Rhea" id="RHEA:16741"/>
        <dbReference type="ChEBI" id="CHEBI:17389"/>
        <dbReference type="ChEBI" id="CHEBI:49172"/>
        <dbReference type="ChEBI" id="CHEBI:57287"/>
        <dbReference type="ChEBI" id="CHEBI:58342"/>
        <dbReference type="EC" id="2.3.1.22"/>
    </reaction>
    <physiologicalReaction direction="left-to-right" evidence="2">
        <dbReference type="Rhea" id="RHEA:16742"/>
    </physiologicalReaction>
</comment>
<comment type="catalytic activity">
    <reaction evidence="2">
        <text>a 2-acylglycerol + hexadecanoyl-CoA = a 1-hexadecanoyl-2-acylglycerol + CoA</text>
        <dbReference type="Rhea" id="RHEA:65096"/>
        <dbReference type="ChEBI" id="CHEBI:17389"/>
        <dbReference type="ChEBI" id="CHEBI:57287"/>
        <dbReference type="ChEBI" id="CHEBI:57379"/>
        <dbReference type="ChEBI" id="CHEBI:156324"/>
    </reaction>
    <physiologicalReaction direction="left-to-right" evidence="2">
        <dbReference type="Rhea" id="RHEA:65097"/>
    </physiologicalReaction>
</comment>
<comment type="catalytic activity">
    <reaction evidence="2">
        <text>a 1-acylglycerol + hexadecanoyl-CoA = an hexadecanoyl-acylglycerol + CoA</text>
        <dbReference type="Rhea" id="RHEA:65100"/>
        <dbReference type="ChEBI" id="CHEBI:35759"/>
        <dbReference type="ChEBI" id="CHEBI:57287"/>
        <dbReference type="ChEBI" id="CHEBI:57379"/>
        <dbReference type="ChEBI" id="CHEBI:156325"/>
    </reaction>
    <physiologicalReaction direction="left-to-right" evidence="2">
        <dbReference type="Rhea" id="RHEA:65101"/>
    </physiologicalReaction>
</comment>
<comment type="catalytic activity">
    <reaction evidence="5">
        <text>a 2-acyl-sn-glycero-3-phosphocholine + an acyl-CoA = a 1,2-diacyl-sn-glycero-3-phosphocholine + CoA</text>
        <dbReference type="Rhea" id="RHEA:10332"/>
        <dbReference type="ChEBI" id="CHEBI:57287"/>
        <dbReference type="ChEBI" id="CHEBI:57643"/>
        <dbReference type="ChEBI" id="CHEBI:57875"/>
        <dbReference type="ChEBI" id="CHEBI:58342"/>
        <dbReference type="EC" id="2.3.1.62"/>
    </reaction>
</comment>
<comment type="catalytic activity">
    <reaction evidence="5">
        <text>2-(9Z-octadecenoyl)-sn-glycero-3-phosphocholine + octadecanoyl-CoA = 1-octadecanoyl-2-(9Z-octadecenoyl)-sn-glycero-3-phosphocholine + CoA</text>
        <dbReference type="Rhea" id="RHEA:74799"/>
        <dbReference type="ChEBI" id="CHEBI:57287"/>
        <dbReference type="ChEBI" id="CHEBI:57394"/>
        <dbReference type="ChEBI" id="CHEBI:75034"/>
        <dbReference type="ChEBI" id="CHEBI:76071"/>
    </reaction>
</comment>
<comment type="catalytic activity">
    <reaction evidence="5">
        <text>2-(9Z,12Z-octadecadienoyl)-sn-glycero-3-phosphocholine + octadecanoyl-CoA = 1-octadecanoyl-2-(9Z,12Z)-octadecadienoyl-sn-glycero-3-phosphocholine + CoA</text>
        <dbReference type="Rhea" id="RHEA:74803"/>
        <dbReference type="ChEBI" id="CHEBI:57287"/>
        <dbReference type="ChEBI" id="CHEBI:57394"/>
        <dbReference type="ChEBI" id="CHEBI:76084"/>
        <dbReference type="ChEBI" id="CHEBI:84822"/>
    </reaction>
</comment>
<comment type="catalytic activity">
    <reaction evidence="5">
        <text>2-(5Z,8Z,11Z,14Z)-eicosatetraenoyl-sn-glycero-3-phosphocholine + octadecanoyl-CoA = 1-octadecanoyl-2-(5Z,8Z,11Z,14Z-eicosatetraenoyl)-sn-glycero-3-phosphocholine + CoA</text>
        <dbReference type="Rhea" id="RHEA:74807"/>
        <dbReference type="ChEBI" id="CHEBI:57287"/>
        <dbReference type="ChEBI" id="CHEBI:57394"/>
        <dbReference type="ChEBI" id="CHEBI:74965"/>
        <dbReference type="ChEBI" id="CHEBI:76079"/>
    </reaction>
</comment>
<comment type="catalytic activity">
    <reaction evidence="5">
        <text>2-(9Z-octadecenoyl)-sn-glycero-3-phosphocholine + hexadecanoyl-CoA = 1-hexadecanoyl-2-(9Z-octadecenoyl)-sn-glycero-3-phosphocholine + CoA</text>
        <dbReference type="Rhea" id="RHEA:74811"/>
        <dbReference type="ChEBI" id="CHEBI:57287"/>
        <dbReference type="ChEBI" id="CHEBI:57379"/>
        <dbReference type="ChEBI" id="CHEBI:73001"/>
        <dbReference type="ChEBI" id="CHEBI:76071"/>
    </reaction>
</comment>
<comment type="catalytic activity">
    <reaction evidence="5">
        <text>2-(9Z-octadecenoyl)-sn-glycero-3-phospho-L-serine + hexadecanoyl-CoA = 1-hexadecanoyl-2-(9Z-octadecenoyl)-sn-glycero-3-phospho-L-serine + CoA</text>
        <dbReference type="Rhea" id="RHEA:74815"/>
        <dbReference type="ChEBI" id="CHEBI:57287"/>
        <dbReference type="ChEBI" id="CHEBI:57379"/>
        <dbReference type="ChEBI" id="CHEBI:75029"/>
        <dbReference type="ChEBI" id="CHEBI:77342"/>
    </reaction>
</comment>
<comment type="catalytic activity">
    <reaction evidence="5">
        <text>2-(4Z,7Z,10Z,13Z,16Z,19Z-docosahexaenoyl)-sn-glycero-3-phosphocholine + octadecanoyl-CoA = 1-octadecanoyl-2-(4Z,7Z,10Z,13Z,16Z,19Z-docosahexaenoyl)-sn-glycero-3-phosphocholine + CoA</text>
        <dbReference type="Rhea" id="RHEA:74823"/>
        <dbReference type="ChEBI" id="CHEBI:57287"/>
        <dbReference type="ChEBI" id="CHEBI:57394"/>
        <dbReference type="ChEBI" id="CHEBI:76085"/>
        <dbReference type="ChEBI" id="CHEBI:84829"/>
    </reaction>
</comment>
<comment type="catalytic activity">
    <reaction evidence="5">
        <text>1-(9Z-octadecenoyl)-sn-glycero-3-phospho-L-serine + octadecanoyl-CoA = 1-(9Z-octadecenoyl)-2-octadecanoyl-sn-glycero-3-phospho-L-serine + CoA</text>
        <dbReference type="Rhea" id="RHEA:37403"/>
        <dbReference type="ChEBI" id="CHEBI:57287"/>
        <dbReference type="ChEBI" id="CHEBI:57394"/>
        <dbReference type="ChEBI" id="CHEBI:74617"/>
        <dbReference type="ChEBI" id="CHEBI:74902"/>
    </reaction>
</comment>
<comment type="catalytic activity">
    <reaction evidence="5">
        <text>a 2-acyl-sn-glycero-3-phosphoethanolamine + a fatty acyl-CoA = a 1,2-diacyl-sn-glycero-3-phosphoethanolamine + CoA</text>
        <dbReference type="Rhea" id="RHEA:70599"/>
        <dbReference type="ChEBI" id="CHEBI:57287"/>
        <dbReference type="ChEBI" id="CHEBI:64612"/>
        <dbReference type="ChEBI" id="CHEBI:65213"/>
        <dbReference type="ChEBI" id="CHEBI:77636"/>
    </reaction>
    <physiologicalReaction direction="left-to-right" evidence="9">
        <dbReference type="Rhea" id="RHEA:70600"/>
    </physiologicalReaction>
</comment>
<comment type="subcellular location">
    <subcellularLocation>
        <location evidence="4">Endoplasmic reticulum membrane</location>
        <topology evidence="4">Multi-pass membrane protein</topology>
    </subcellularLocation>
</comment>
<comment type="tissue specificity">
    <text evidence="4">Highly expressed in liver and placenta. Also expressed in peripheral blood, lung, kidney and brain. Detected at lower levels in colon. High expression is detected in brain and testis.</text>
</comment>
<comment type="domain">
    <text evidence="1">The HXXXXD motif is essential for acyltransferase activity and may constitute the binding site for the phosphate moiety of the glycerol-3-phosphate.</text>
</comment>
<comment type="similarity">
    <text evidence="8">Belongs to the 1-acyl-sn-glycerol-3-phosphate acyltransferase family.</text>
</comment>
<comment type="caution">
    <text evidence="2">The role in phosphatidylglycerols remodeling and cardiolipin synthesis is questioned as both processes occur in mitochondria. The monoacylglycerol acyltransferase activity is also weak and a direct role in triacylglycerol synthesis appears unlikely.</text>
</comment>
<comment type="sequence caution" evidence="8">
    <conflict type="erroneous initiation">
        <sequence resource="EMBL-CDS" id="BAA13196"/>
    </conflict>
</comment>
<accession>Q92604</accession>
<accession>Q53YL2</accession>
<dbReference type="EC" id="2.3.1.62" evidence="5"/>
<dbReference type="EC" id="2.3.1.22" evidence="2"/>
<dbReference type="EC" id="2.3.1.-" evidence="4"/>
<dbReference type="EMBL" id="D86960">
    <property type="protein sequence ID" value="BAA13196.2"/>
    <property type="status" value="ALT_INIT"/>
    <property type="molecule type" value="mRNA"/>
</dbReference>
<dbReference type="EMBL" id="AY561706">
    <property type="protein sequence ID" value="AAS66979.1"/>
    <property type="molecule type" value="mRNA"/>
</dbReference>
<dbReference type="EMBL" id="AC096637">
    <property type="status" value="NOT_ANNOTATED_CDS"/>
    <property type="molecule type" value="Genomic_DNA"/>
</dbReference>
<dbReference type="EMBL" id="AL445488">
    <property type="status" value="NOT_ANNOTATED_CDS"/>
    <property type="molecule type" value="Genomic_DNA"/>
</dbReference>
<dbReference type="EMBL" id="CH471100">
    <property type="protein sequence ID" value="EAW93407.1"/>
    <property type="molecule type" value="Genomic_DNA"/>
</dbReference>
<dbReference type="EMBL" id="CH471100">
    <property type="protein sequence ID" value="EAW93408.1"/>
    <property type="molecule type" value="Genomic_DNA"/>
</dbReference>
<dbReference type="EMBL" id="BC034621">
    <property type="protein sequence ID" value="AAH34621.1"/>
    <property type="molecule type" value="mRNA"/>
</dbReference>
<dbReference type="CCDS" id="CCDS31018.1"/>
<dbReference type="RefSeq" id="NP_001307737.1">
    <property type="nucleotide sequence ID" value="NM_001320808.2"/>
</dbReference>
<dbReference type="RefSeq" id="NP_001362770.1">
    <property type="nucleotide sequence ID" value="NM_001375841.1"/>
</dbReference>
<dbReference type="RefSeq" id="NP_001362771.1">
    <property type="nucleotide sequence ID" value="NM_001375842.1"/>
</dbReference>
<dbReference type="RefSeq" id="NP_055688.1">
    <property type="nucleotide sequence ID" value="NM_014873.3"/>
</dbReference>
<dbReference type="RefSeq" id="XP_011508530.1">
    <property type="nucleotide sequence ID" value="XM_011510228.2"/>
</dbReference>
<dbReference type="RefSeq" id="XP_011508531.1">
    <property type="nucleotide sequence ID" value="XM_011510229.4"/>
</dbReference>
<dbReference type="RefSeq" id="XP_047292096.1">
    <property type="nucleotide sequence ID" value="XM_047436140.1"/>
</dbReference>
<dbReference type="RefSeq" id="XP_054195922.1">
    <property type="nucleotide sequence ID" value="XM_054339947.1"/>
</dbReference>
<dbReference type="RefSeq" id="XP_054195923.1">
    <property type="nucleotide sequence ID" value="XM_054339948.1"/>
</dbReference>
<dbReference type="BioGRID" id="115254">
    <property type="interactions" value="111"/>
</dbReference>
<dbReference type="FunCoup" id="Q92604">
    <property type="interactions" value="1188"/>
</dbReference>
<dbReference type="IntAct" id="Q92604">
    <property type="interactions" value="49"/>
</dbReference>
<dbReference type="MINT" id="Q92604"/>
<dbReference type="STRING" id="9606.ENSP00000355964"/>
<dbReference type="SwissLipids" id="SLP:000000128"/>
<dbReference type="GlyGen" id="Q92604">
    <property type="glycosylation" value="1 site, 1 N-linked glycan (1 site)"/>
</dbReference>
<dbReference type="iPTMnet" id="Q92604"/>
<dbReference type="PhosphoSitePlus" id="Q92604"/>
<dbReference type="SwissPalm" id="Q92604"/>
<dbReference type="BioMuta" id="LPGAT1"/>
<dbReference type="DMDM" id="6136501"/>
<dbReference type="jPOST" id="Q92604"/>
<dbReference type="MassIVE" id="Q92604"/>
<dbReference type="PaxDb" id="9606-ENSP00000355964"/>
<dbReference type="PeptideAtlas" id="Q92604"/>
<dbReference type="ProteomicsDB" id="75351"/>
<dbReference type="Pumba" id="Q92604"/>
<dbReference type="Antibodypedia" id="1888">
    <property type="antibodies" value="88 antibodies from 23 providers"/>
</dbReference>
<dbReference type="DNASU" id="9926"/>
<dbReference type="Ensembl" id="ENST00000366996.1">
    <property type="protein sequence ID" value="ENSP00000355963.1"/>
    <property type="gene ID" value="ENSG00000123684.13"/>
</dbReference>
<dbReference type="Ensembl" id="ENST00000366997.9">
    <property type="protein sequence ID" value="ENSP00000355964.4"/>
    <property type="gene ID" value="ENSG00000123684.13"/>
</dbReference>
<dbReference type="GeneID" id="9926"/>
<dbReference type="KEGG" id="hsa:9926"/>
<dbReference type="MANE-Select" id="ENST00000366997.9">
    <property type="protein sequence ID" value="ENSP00000355964.4"/>
    <property type="RefSeq nucleotide sequence ID" value="NM_014873.3"/>
    <property type="RefSeq protein sequence ID" value="NP_055688.1"/>
</dbReference>
<dbReference type="UCSC" id="uc001hiu.4">
    <property type="organism name" value="human"/>
</dbReference>
<dbReference type="AGR" id="HGNC:28985"/>
<dbReference type="CTD" id="9926"/>
<dbReference type="DisGeNET" id="9926"/>
<dbReference type="GeneCards" id="LPGAT1"/>
<dbReference type="HGNC" id="HGNC:28985">
    <property type="gene designation" value="LPGAT1"/>
</dbReference>
<dbReference type="HPA" id="ENSG00000123684">
    <property type="expression patterns" value="Low tissue specificity"/>
</dbReference>
<dbReference type="MIM" id="610473">
    <property type="type" value="gene"/>
</dbReference>
<dbReference type="neXtProt" id="NX_Q92604"/>
<dbReference type="OpenTargets" id="ENSG00000123684"/>
<dbReference type="PharmGKB" id="PA134869091"/>
<dbReference type="VEuPathDB" id="HostDB:ENSG00000123684"/>
<dbReference type="eggNOG" id="KOG1505">
    <property type="taxonomic scope" value="Eukaryota"/>
</dbReference>
<dbReference type="GeneTree" id="ENSGT00950000182836"/>
<dbReference type="HOGENOM" id="CLU_046804_2_0_1"/>
<dbReference type="InParanoid" id="Q92604"/>
<dbReference type="OMA" id="EMGDDIT"/>
<dbReference type="OrthoDB" id="5920068at2759"/>
<dbReference type="PAN-GO" id="Q92604">
    <property type="GO annotations" value="4 GO annotations based on evolutionary models"/>
</dbReference>
<dbReference type="PhylomeDB" id="Q92604"/>
<dbReference type="TreeFam" id="TF314346"/>
<dbReference type="PathwayCommons" id="Q92604"/>
<dbReference type="Reactome" id="R-HSA-1482925">
    <property type="pathway name" value="Acyl chain remodelling of PG"/>
</dbReference>
<dbReference type="SignaLink" id="Q92604"/>
<dbReference type="BioGRID-ORCS" id="9926">
    <property type="hits" value="30 hits in 1153 CRISPR screens"/>
</dbReference>
<dbReference type="ChiTaRS" id="LPGAT1">
    <property type="organism name" value="human"/>
</dbReference>
<dbReference type="GenomeRNAi" id="9926"/>
<dbReference type="Pharos" id="Q92604">
    <property type="development level" value="Tbio"/>
</dbReference>
<dbReference type="PRO" id="PR:Q92604"/>
<dbReference type="Proteomes" id="UP000005640">
    <property type="component" value="Chromosome 1"/>
</dbReference>
<dbReference type="RNAct" id="Q92604">
    <property type="molecule type" value="protein"/>
</dbReference>
<dbReference type="Bgee" id="ENSG00000123684">
    <property type="expression patterns" value="Expressed in middle temporal gyrus and 186 other cell types or tissues"/>
</dbReference>
<dbReference type="GO" id="GO:0005737">
    <property type="term" value="C:cytoplasm"/>
    <property type="evidence" value="ECO:0000314"/>
    <property type="project" value="UniProtKB"/>
</dbReference>
<dbReference type="GO" id="GO:0012505">
    <property type="term" value="C:endomembrane system"/>
    <property type="evidence" value="ECO:0000318"/>
    <property type="project" value="GO_Central"/>
</dbReference>
<dbReference type="GO" id="GO:0005783">
    <property type="term" value="C:endoplasmic reticulum"/>
    <property type="evidence" value="ECO:0000318"/>
    <property type="project" value="GO_Central"/>
</dbReference>
<dbReference type="GO" id="GO:0005789">
    <property type="term" value="C:endoplasmic reticulum membrane"/>
    <property type="evidence" value="ECO:0000315"/>
    <property type="project" value="UniProtKB"/>
</dbReference>
<dbReference type="GO" id="GO:0016020">
    <property type="term" value="C:membrane"/>
    <property type="evidence" value="ECO:0007005"/>
    <property type="project" value="UniProtKB"/>
</dbReference>
<dbReference type="GO" id="GO:0003841">
    <property type="term" value="F:1-acylglycerol-3-phosphate O-acyltransferase activity"/>
    <property type="evidence" value="ECO:0000304"/>
    <property type="project" value="Reactome"/>
</dbReference>
<dbReference type="GO" id="GO:0003846">
    <property type="term" value="F:2-acylglycerol O-acyltransferase activity"/>
    <property type="evidence" value="ECO:0000250"/>
    <property type="project" value="UniProtKB"/>
</dbReference>
<dbReference type="GO" id="GO:0047144">
    <property type="term" value="F:2-acylglycerol-3-phosphate O-acyltransferase activity"/>
    <property type="evidence" value="ECO:0000304"/>
    <property type="project" value="Reactome"/>
</dbReference>
<dbReference type="GO" id="GO:0047190">
    <property type="term" value="F:2-acylglycerophosphocholine O-acyltransferase activity"/>
    <property type="evidence" value="ECO:0000314"/>
    <property type="project" value="UniProtKB"/>
</dbReference>
<dbReference type="GO" id="GO:0016746">
    <property type="term" value="F:acyltransferase activity"/>
    <property type="evidence" value="ECO:0000318"/>
    <property type="project" value="GO_Central"/>
</dbReference>
<dbReference type="GO" id="GO:0071618">
    <property type="term" value="F:lysophosphatidylethanolamine acyltransferase activity"/>
    <property type="evidence" value="ECO:0000250"/>
    <property type="project" value="UniProtKB"/>
</dbReference>
<dbReference type="GO" id="GO:0071617">
    <property type="term" value="F:lysophospholipid acyltransferase activity"/>
    <property type="evidence" value="ECO:0000314"/>
    <property type="project" value="UniProtKB"/>
</dbReference>
<dbReference type="GO" id="GO:0036152">
    <property type="term" value="P:phosphatidylethanolamine acyl-chain remodeling"/>
    <property type="evidence" value="ECO:0000250"/>
    <property type="project" value="UniProtKB"/>
</dbReference>
<dbReference type="GO" id="GO:0036148">
    <property type="term" value="P:phosphatidylglycerol acyl-chain remodeling"/>
    <property type="evidence" value="ECO:0000304"/>
    <property type="project" value="Reactome"/>
</dbReference>
<dbReference type="GO" id="GO:0036149">
    <property type="term" value="P:phosphatidylinositol acyl-chain remodeling"/>
    <property type="evidence" value="ECO:0000318"/>
    <property type="project" value="GO_Central"/>
</dbReference>
<dbReference type="GO" id="GO:0008654">
    <property type="term" value="P:phospholipid biosynthetic process"/>
    <property type="evidence" value="ECO:0007669"/>
    <property type="project" value="UniProtKB-KW"/>
</dbReference>
<dbReference type="GO" id="GO:0045723">
    <property type="term" value="P:positive regulation of fatty acid biosynthetic process"/>
    <property type="evidence" value="ECO:0000315"/>
    <property type="project" value="BHF-UCL"/>
</dbReference>
<dbReference type="GO" id="GO:0019432">
    <property type="term" value="P:triglyceride biosynthetic process"/>
    <property type="evidence" value="ECO:0000250"/>
    <property type="project" value="UniProtKB"/>
</dbReference>
<dbReference type="CDD" id="cd07990">
    <property type="entry name" value="LPLAT_LCLAT1-like"/>
    <property type="match status" value="1"/>
</dbReference>
<dbReference type="InterPro" id="IPR032098">
    <property type="entry name" value="Acyltransf_C"/>
</dbReference>
<dbReference type="InterPro" id="IPR002123">
    <property type="entry name" value="Plipid/glycerol_acylTrfase"/>
</dbReference>
<dbReference type="PANTHER" id="PTHR10983">
    <property type="entry name" value="1-ACYLGLYCEROL-3-PHOSPHATE ACYLTRANSFERASE-RELATED"/>
    <property type="match status" value="1"/>
</dbReference>
<dbReference type="PANTHER" id="PTHR10983:SF2">
    <property type="entry name" value="ACYL-COA:LYSOPHOSPHATIDYLGLYCEROL ACYLTRANSFERASE 1"/>
    <property type="match status" value="1"/>
</dbReference>
<dbReference type="Pfam" id="PF16076">
    <property type="entry name" value="Acyltransf_C"/>
    <property type="match status" value="1"/>
</dbReference>
<dbReference type="Pfam" id="PF01553">
    <property type="entry name" value="Acyltransferase"/>
    <property type="match status" value="1"/>
</dbReference>
<dbReference type="SMART" id="SM00563">
    <property type="entry name" value="PlsC"/>
    <property type="match status" value="1"/>
</dbReference>
<dbReference type="SUPFAM" id="SSF69593">
    <property type="entry name" value="Glycerol-3-phosphate (1)-acyltransferase"/>
    <property type="match status" value="1"/>
</dbReference>
<organism>
    <name type="scientific">Homo sapiens</name>
    <name type="common">Human</name>
    <dbReference type="NCBI Taxonomy" id="9606"/>
    <lineage>
        <taxon>Eukaryota</taxon>
        <taxon>Metazoa</taxon>
        <taxon>Chordata</taxon>
        <taxon>Craniata</taxon>
        <taxon>Vertebrata</taxon>
        <taxon>Euteleostomi</taxon>
        <taxon>Mammalia</taxon>
        <taxon>Eutheria</taxon>
        <taxon>Euarchontoglires</taxon>
        <taxon>Primates</taxon>
        <taxon>Haplorrhini</taxon>
        <taxon>Catarrhini</taxon>
        <taxon>Hominidae</taxon>
        <taxon>Homo</taxon>
    </lineage>
</organism>
<protein>
    <recommendedName>
        <fullName evidence="8">Acyl-CoA:lysophosphatidylglycerol acyltransferase 1</fullName>
    </recommendedName>
    <alternativeName>
        <fullName>2-acylglycerophosphocholine O-acyltransferase</fullName>
        <ecNumber evidence="5">2.3.1.62</ecNumber>
    </alternativeName>
    <alternativeName>
        <fullName evidence="2">Acyl-CoA:monoacylglycerol acyltransferase LPGAT1</fullName>
        <ecNumber evidence="2">2.3.1.22</ecNumber>
    </alternativeName>
    <alternativeName>
        <fullName evidence="6">Lysophospholipid acyltransferase 7</fullName>
        <shortName evidence="6">LPLAT7</shortName>
        <ecNumber evidence="4">2.3.1.-</ecNumber>
    </alternativeName>
    <alternativeName>
        <fullName evidence="2">Stearoyl-CoA:1-lyso-2-acyl-PE acyltransferase</fullName>
    </alternativeName>
</protein>
<sequence>MAITLEEAPWLGWLLVKALMRFAFMVVNNLVAIPSYICYVIILQPLRVLDSKRFWYIEGIMYKWLLGMVASWGWYAGYTVMEWGEDIKAVSKDEAVMLVNHQATGDVCTLMMCLQDKGLVVAQMMWLMDHIFKYTNFGIVSLVHGDFFIRQGRSYRDQQLLLLKKHLENNYRSRDRKWIVLFPEGGFLRKRRETSQAFAKKNNLPFLTNVTLPRSGATKIILNALVAQQKNGSPAGGDAKELDSKSKGLQWIIDTTIAYPKAEPIDIQTWILGYRKPTVTHVHYRIFPIKDVPLETDDLTTWLYQRFVEKEDLLSHFYETGAFPPSKGHKEAVSREMTLSNLWIFLIQSFAFLSGYMWYNIIQYFYHCLF</sequence>
<evidence type="ECO:0000250" key="1"/>
<evidence type="ECO:0000250" key="2">
    <source>
        <dbReference type="UniProtKB" id="Q91YX5"/>
    </source>
</evidence>
<evidence type="ECO:0000255" key="3"/>
<evidence type="ECO:0000269" key="4">
    <source>
    </source>
</evidence>
<evidence type="ECO:0000269" key="5">
    <source>
    </source>
</evidence>
<evidence type="ECO:0000303" key="6">
    <source>
    </source>
</evidence>
<evidence type="ECO:0000303" key="7">
    <source>
    </source>
</evidence>
<evidence type="ECO:0000305" key="8"/>
<evidence type="ECO:0000305" key="9">
    <source>
    </source>
</evidence>
<evidence type="ECO:0000312" key="10">
    <source>
        <dbReference type="HGNC" id="HGNC:28985"/>
    </source>
</evidence>
<proteinExistence type="evidence at protein level"/>